<reference key="1">
    <citation type="journal article" date="2004" name="Nature">
        <title>Genome evolution in yeasts.</title>
        <authorList>
            <person name="Dujon B."/>
            <person name="Sherman D."/>
            <person name="Fischer G."/>
            <person name="Durrens P."/>
            <person name="Casaregola S."/>
            <person name="Lafontaine I."/>
            <person name="de Montigny J."/>
            <person name="Marck C."/>
            <person name="Neuveglise C."/>
            <person name="Talla E."/>
            <person name="Goffard N."/>
            <person name="Frangeul L."/>
            <person name="Aigle M."/>
            <person name="Anthouard V."/>
            <person name="Babour A."/>
            <person name="Barbe V."/>
            <person name="Barnay S."/>
            <person name="Blanchin S."/>
            <person name="Beckerich J.-M."/>
            <person name="Beyne E."/>
            <person name="Bleykasten C."/>
            <person name="Boisrame A."/>
            <person name="Boyer J."/>
            <person name="Cattolico L."/>
            <person name="Confanioleri F."/>
            <person name="de Daruvar A."/>
            <person name="Despons L."/>
            <person name="Fabre E."/>
            <person name="Fairhead C."/>
            <person name="Ferry-Dumazet H."/>
            <person name="Groppi A."/>
            <person name="Hantraye F."/>
            <person name="Hennequin C."/>
            <person name="Jauniaux N."/>
            <person name="Joyet P."/>
            <person name="Kachouri R."/>
            <person name="Kerrest A."/>
            <person name="Koszul R."/>
            <person name="Lemaire M."/>
            <person name="Lesur I."/>
            <person name="Ma L."/>
            <person name="Muller H."/>
            <person name="Nicaud J.-M."/>
            <person name="Nikolski M."/>
            <person name="Oztas S."/>
            <person name="Ozier-Kalogeropoulos O."/>
            <person name="Pellenz S."/>
            <person name="Potier S."/>
            <person name="Richard G.-F."/>
            <person name="Straub M.-L."/>
            <person name="Suleau A."/>
            <person name="Swennen D."/>
            <person name="Tekaia F."/>
            <person name="Wesolowski-Louvel M."/>
            <person name="Westhof E."/>
            <person name="Wirth B."/>
            <person name="Zeniou-Meyer M."/>
            <person name="Zivanovic Y."/>
            <person name="Bolotin-Fukuhara M."/>
            <person name="Thierry A."/>
            <person name="Bouchier C."/>
            <person name="Caudron B."/>
            <person name="Scarpelli C."/>
            <person name="Gaillardin C."/>
            <person name="Weissenbach J."/>
            <person name="Wincker P."/>
            <person name="Souciet J.-L."/>
        </authorList>
    </citation>
    <scope>NUCLEOTIDE SEQUENCE [LARGE SCALE GENOMIC DNA]</scope>
    <source>
        <strain>CLIB 122 / E 150</strain>
    </source>
</reference>
<feature type="chain" id="PRO_0000237636" description="Serine/threonine-protein kinase STE20">
    <location>
        <begin position="1"/>
        <end position="1125"/>
    </location>
</feature>
<feature type="domain" description="CRIB" evidence="2">
    <location>
        <begin position="388"/>
        <end position="401"/>
    </location>
</feature>
<feature type="domain" description="Protein kinase" evidence="3">
    <location>
        <begin position="844"/>
        <end position="1095"/>
    </location>
</feature>
<feature type="region of interest" description="Disordered" evidence="5">
    <location>
        <begin position="50"/>
        <end position="394"/>
    </location>
</feature>
<feature type="region of interest" description="Disordered" evidence="5">
    <location>
        <begin position="498"/>
        <end position="680"/>
    </location>
</feature>
<feature type="region of interest" description="Disordered" evidence="5">
    <location>
        <begin position="693"/>
        <end position="771"/>
    </location>
</feature>
<feature type="region of interest" description="Disordered" evidence="5">
    <location>
        <begin position="788"/>
        <end position="824"/>
    </location>
</feature>
<feature type="compositionally biased region" description="Basic and acidic residues" evidence="5">
    <location>
        <begin position="51"/>
        <end position="60"/>
    </location>
</feature>
<feature type="compositionally biased region" description="Basic and acidic residues" evidence="5">
    <location>
        <begin position="71"/>
        <end position="81"/>
    </location>
</feature>
<feature type="compositionally biased region" description="Basic and acidic residues" evidence="5">
    <location>
        <begin position="99"/>
        <end position="125"/>
    </location>
</feature>
<feature type="compositionally biased region" description="Low complexity" evidence="5">
    <location>
        <begin position="128"/>
        <end position="154"/>
    </location>
</feature>
<feature type="compositionally biased region" description="Polar residues" evidence="5">
    <location>
        <begin position="197"/>
        <end position="210"/>
    </location>
</feature>
<feature type="compositionally biased region" description="Polar residues" evidence="5">
    <location>
        <begin position="233"/>
        <end position="248"/>
    </location>
</feature>
<feature type="compositionally biased region" description="Gly residues" evidence="5">
    <location>
        <begin position="251"/>
        <end position="261"/>
    </location>
</feature>
<feature type="compositionally biased region" description="Polar residues" evidence="5">
    <location>
        <begin position="287"/>
        <end position="309"/>
    </location>
</feature>
<feature type="compositionally biased region" description="Polar residues" evidence="5">
    <location>
        <begin position="358"/>
        <end position="370"/>
    </location>
</feature>
<feature type="compositionally biased region" description="Gly residues" evidence="5">
    <location>
        <begin position="514"/>
        <end position="524"/>
    </location>
</feature>
<feature type="compositionally biased region" description="Low complexity" evidence="5">
    <location>
        <begin position="543"/>
        <end position="568"/>
    </location>
</feature>
<feature type="compositionally biased region" description="Polar residues" evidence="5">
    <location>
        <begin position="576"/>
        <end position="599"/>
    </location>
</feature>
<feature type="compositionally biased region" description="Basic and acidic residues" evidence="5">
    <location>
        <begin position="600"/>
        <end position="614"/>
    </location>
</feature>
<feature type="compositionally biased region" description="Gly residues" evidence="5">
    <location>
        <begin position="635"/>
        <end position="644"/>
    </location>
</feature>
<feature type="compositionally biased region" description="Pro residues" evidence="5">
    <location>
        <begin position="651"/>
        <end position="668"/>
    </location>
</feature>
<feature type="compositionally biased region" description="Basic and acidic residues" evidence="5">
    <location>
        <begin position="694"/>
        <end position="703"/>
    </location>
</feature>
<feature type="compositionally biased region" description="Low complexity" evidence="5">
    <location>
        <begin position="706"/>
        <end position="738"/>
    </location>
</feature>
<feature type="compositionally biased region" description="Low complexity" evidence="5">
    <location>
        <begin position="747"/>
        <end position="762"/>
    </location>
</feature>
<feature type="compositionally biased region" description="Polar residues" evidence="5">
    <location>
        <begin position="795"/>
        <end position="804"/>
    </location>
</feature>
<feature type="active site" description="Proton acceptor" evidence="3 4">
    <location>
        <position position="963"/>
    </location>
</feature>
<feature type="binding site" evidence="3">
    <location>
        <begin position="850"/>
        <end position="858"/>
    </location>
    <ligand>
        <name>ATP</name>
        <dbReference type="ChEBI" id="CHEBI:30616"/>
    </ligand>
</feature>
<feature type="binding site" evidence="3">
    <location>
        <position position="873"/>
    </location>
    <ligand>
        <name>ATP</name>
        <dbReference type="ChEBI" id="CHEBI:30616"/>
    </ligand>
</feature>
<keyword id="KW-0067">ATP-binding</keyword>
<keyword id="KW-0963">Cytoplasm</keyword>
<keyword id="KW-0418">Kinase</keyword>
<keyword id="KW-0547">Nucleotide-binding</keyword>
<keyword id="KW-0539">Nucleus</keyword>
<keyword id="KW-0589">Pheromone response</keyword>
<keyword id="KW-1185">Reference proteome</keyword>
<keyword id="KW-0723">Serine/threonine-protein kinase</keyword>
<keyword id="KW-0808">Transferase</keyword>
<dbReference type="EC" id="2.7.11.1"/>
<dbReference type="EMBL" id="CR382132">
    <property type="protein sequence ID" value="CAG77627.1"/>
    <property type="molecule type" value="Genomic_DNA"/>
</dbReference>
<dbReference type="RefSeq" id="XP_504825.1">
    <property type="nucleotide sequence ID" value="XM_504825.1"/>
</dbReference>
<dbReference type="SMR" id="Q6C3D7"/>
<dbReference type="FunCoup" id="Q6C3D7">
    <property type="interactions" value="404"/>
</dbReference>
<dbReference type="STRING" id="284591.Q6C3D7"/>
<dbReference type="EnsemblFungi" id="CAG77627">
    <property type="protein sequence ID" value="CAG77627"/>
    <property type="gene ID" value="YALI0_F00572g"/>
</dbReference>
<dbReference type="VEuPathDB" id="FungiDB:YALI0_F00572g"/>
<dbReference type="HOGENOM" id="CLU_000288_26_6_1"/>
<dbReference type="InParanoid" id="Q6C3D7"/>
<dbReference type="OrthoDB" id="120741at4891"/>
<dbReference type="Proteomes" id="UP000001300">
    <property type="component" value="Chromosome F"/>
</dbReference>
<dbReference type="GO" id="GO:0005737">
    <property type="term" value="C:cytoplasm"/>
    <property type="evidence" value="ECO:0000318"/>
    <property type="project" value="GO_Central"/>
</dbReference>
<dbReference type="GO" id="GO:0005634">
    <property type="term" value="C:nucleus"/>
    <property type="evidence" value="ECO:0007669"/>
    <property type="project" value="UniProtKB-SubCell"/>
</dbReference>
<dbReference type="GO" id="GO:0005524">
    <property type="term" value="F:ATP binding"/>
    <property type="evidence" value="ECO:0007669"/>
    <property type="project" value="UniProtKB-KW"/>
</dbReference>
<dbReference type="GO" id="GO:0106310">
    <property type="term" value="F:protein serine kinase activity"/>
    <property type="evidence" value="ECO:0007669"/>
    <property type="project" value="RHEA"/>
</dbReference>
<dbReference type="GO" id="GO:0004674">
    <property type="term" value="F:protein serine/threonine kinase activity"/>
    <property type="evidence" value="ECO:0000318"/>
    <property type="project" value="GO_Central"/>
</dbReference>
<dbReference type="GO" id="GO:0009267">
    <property type="term" value="P:cellular response to starvation"/>
    <property type="evidence" value="ECO:0000318"/>
    <property type="project" value="GO_Central"/>
</dbReference>
<dbReference type="GO" id="GO:0035556">
    <property type="term" value="P:intracellular signal transduction"/>
    <property type="evidence" value="ECO:0000318"/>
    <property type="project" value="GO_Central"/>
</dbReference>
<dbReference type="GO" id="GO:0043408">
    <property type="term" value="P:regulation of MAPK cascade"/>
    <property type="evidence" value="ECO:0000318"/>
    <property type="project" value="GO_Central"/>
</dbReference>
<dbReference type="GO" id="GO:0019236">
    <property type="term" value="P:response to pheromone"/>
    <property type="evidence" value="ECO:0007669"/>
    <property type="project" value="UniProtKB-KW"/>
</dbReference>
<dbReference type="CDD" id="cd01093">
    <property type="entry name" value="CRIB_PAK_like"/>
    <property type="match status" value="1"/>
</dbReference>
<dbReference type="CDD" id="cd06614">
    <property type="entry name" value="STKc_PAK"/>
    <property type="match status" value="1"/>
</dbReference>
<dbReference type="FunFam" id="1.10.510.10:FF:000011">
    <property type="entry name" value="Non-specific serine/threonine protein kinase"/>
    <property type="match status" value="1"/>
</dbReference>
<dbReference type="FunFam" id="3.30.200.20:FF:000385">
    <property type="entry name" value="Non-specific serine/threonine protein kinase"/>
    <property type="match status" value="1"/>
</dbReference>
<dbReference type="Gene3D" id="3.90.810.10">
    <property type="entry name" value="CRIB domain"/>
    <property type="match status" value="1"/>
</dbReference>
<dbReference type="Gene3D" id="3.30.200.20">
    <property type="entry name" value="Phosphorylase Kinase, domain 1"/>
    <property type="match status" value="1"/>
</dbReference>
<dbReference type="Gene3D" id="1.10.510.10">
    <property type="entry name" value="Transferase(Phosphotransferase) domain 1"/>
    <property type="match status" value="1"/>
</dbReference>
<dbReference type="InterPro" id="IPR000095">
    <property type="entry name" value="CRIB_dom"/>
</dbReference>
<dbReference type="InterPro" id="IPR036936">
    <property type="entry name" value="CRIB_dom_sf"/>
</dbReference>
<dbReference type="InterPro" id="IPR011009">
    <property type="entry name" value="Kinase-like_dom_sf"/>
</dbReference>
<dbReference type="InterPro" id="IPR051931">
    <property type="entry name" value="PAK3-like"/>
</dbReference>
<dbReference type="InterPro" id="IPR033923">
    <property type="entry name" value="PAK_BD"/>
</dbReference>
<dbReference type="InterPro" id="IPR000719">
    <property type="entry name" value="Prot_kinase_dom"/>
</dbReference>
<dbReference type="InterPro" id="IPR017441">
    <property type="entry name" value="Protein_kinase_ATP_BS"/>
</dbReference>
<dbReference type="InterPro" id="IPR008271">
    <property type="entry name" value="Ser/Thr_kinase_AS"/>
</dbReference>
<dbReference type="PANTHER" id="PTHR45832">
    <property type="entry name" value="SERINE/THREONINE-PROTEIN KINASE SAMKA-RELATED-RELATED"/>
    <property type="match status" value="1"/>
</dbReference>
<dbReference type="PANTHER" id="PTHR45832:SF22">
    <property type="entry name" value="SERINE_THREONINE-PROTEIN KINASE SAMKA-RELATED"/>
    <property type="match status" value="1"/>
</dbReference>
<dbReference type="Pfam" id="PF00786">
    <property type="entry name" value="PBD"/>
    <property type="match status" value="1"/>
</dbReference>
<dbReference type="Pfam" id="PF00069">
    <property type="entry name" value="Pkinase"/>
    <property type="match status" value="1"/>
</dbReference>
<dbReference type="SMART" id="SM00285">
    <property type="entry name" value="PBD"/>
    <property type="match status" value="1"/>
</dbReference>
<dbReference type="SMART" id="SM00220">
    <property type="entry name" value="S_TKc"/>
    <property type="match status" value="1"/>
</dbReference>
<dbReference type="SUPFAM" id="SSF56112">
    <property type="entry name" value="Protein kinase-like (PK-like)"/>
    <property type="match status" value="1"/>
</dbReference>
<dbReference type="PROSITE" id="PS50108">
    <property type="entry name" value="CRIB"/>
    <property type="match status" value="1"/>
</dbReference>
<dbReference type="PROSITE" id="PS00107">
    <property type="entry name" value="PROTEIN_KINASE_ATP"/>
    <property type="match status" value="1"/>
</dbReference>
<dbReference type="PROSITE" id="PS50011">
    <property type="entry name" value="PROTEIN_KINASE_DOM"/>
    <property type="match status" value="1"/>
</dbReference>
<dbReference type="PROSITE" id="PS00108">
    <property type="entry name" value="PROTEIN_KINASE_ST"/>
    <property type="match status" value="1"/>
</dbReference>
<protein>
    <recommendedName>
        <fullName>Serine/threonine-protein kinase STE20</fullName>
        <ecNumber>2.7.11.1</ecNumber>
    </recommendedName>
</protein>
<evidence type="ECO:0000250" key="1"/>
<evidence type="ECO:0000255" key="2">
    <source>
        <dbReference type="PROSITE-ProRule" id="PRU00057"/>
    </source>
</evidence>
<evidence type="ECO:0000255" key="3">
    <source>
        <dbReference type="PROSITE-ProRule" id="PRU00159"/>
    </source>
</evidence>
<evidence type="ECO:0000255" key="4">
    <source>
        <dbReference type="PROSITE-ProRule" id="PRU10027"/>
    </source>
</evidence>
<evidence type="ECO:0000256" key="5">
    <source>
        <dbReference type="SAM" id="MobiDB-lite"/>
    </source>
</evidence>
<evidence type="ECO:0000305" key="6"/>
<gene>
    <name type="primary">STE20</name>
    <name type="ordered locus">YALI0F00572g</name>
</gene>
<organism>
    <name type="scientific">Yarrowia lipolytica (strain CLIB 122 / E 150)</name>
    <name type="common">Yeast</name>
    <name type="synonym">Candida lipolytica</name>
    <dbReference type="NCBI Taxonomy" id="284591"/>
    <lineage>
        <taxon>Eukaryota</taxon>
        <taxon>Fungi</taxon>
        <taxon>Dikarya</taxon>
        <taxon>Ascomycota</taxon>
        <taxon>Saccharomycotina</taxon>
        <taxon>Dipodascomycetes</taxon>
        <taxon>Dipodascales</taxon>
        <taxon>Dipodascales incertae sedis</taxon>
        <taxon>Yarrowia</taxon>
    </lineage>
</organism>
<accession>Q6C3D7</accession>
<sequence length="1125" mass="119340">MCFNLPLPHLPPYLPFITSSFFFFSFFPFSLTNTDAPIEFETTIIDPAEQTSHHVSESRPTHLSFSSSSESPRDQSREQSSRDVSASPVFPKRQQSLLRLDEHMAGGAGESRDEPHGEPSDDAHKSRASSTSSSSSFGQSWNQSSASQRASVSSMGGVDVAQKRPGPSSGGLTGASAASGMPPAPTSQAPAIPPITPQMQTGAFEQYTPQTAPPIPTQSQLGQDGRKRAATLDRQQQYVPSYGYSSPANGERGGPTGGTPGGTPMSPGGVAHVTSPGGGPSAASVHRSFSTTTPHAPTKNSRRIVSTSAAPMRKQIDDANAALGRAVDPSRDSQPMQSRDKRSKSISSRGGMKGVFSNLVSSMGTLSRKNTTVRRSESDTSAPSTPKISGPYDAKHVTHVGFNFDTGEFTGLPKPWQKLLSESGISKVEAEQHPQAVMDIMAFYTDQKDDGVWQKFGGANQAGSGATATTPYNAQNGFSPIASPGATTPTLGALNLGTPLSVDLDTEGDTSTSTGGGGGVGGGDYFAKPRSAPFPPAAGGGSASSSTATLGTGATASGGATTATPAIPSRDRTRESSLSSGTSNQGPPVTPLALSQSRQNLREEAPATPEEKPLAHFVASRKAPRPPSASPKKTGGAGASGDSGAGAAPPSAAPKSPPPRPPPAPPLGVPSVHAPNSEYRQKMITQLEAFNAKRQQERAERHAQKQKLAAAHAQAVQRQQRQQQQQQQQQQQQQSAQQGAMPSVMPQMQHGSMQQAQQSVSGGSSGLTPQQKQLIQQKQLLELQKATGGQVGGPVTSSTQQVLSNPAAAAAASQRKREQRLRKDQQVVARLNQICTPGDPTKLYRNLVKIGQGASGGVFTAYEVGSNLSVAIKQMNLEHQPKKELIINEILVMKDSKHKNIVNFIDSYLHGGDLWVVMEYMEGGSLTDVVTYNMMTESQIGAVCRETLLGLQHLHSKGVIHRDIKSDNVLLSMRGEIKLTDFGFCAQINESNLKRTTMVGTPYWMAPEVVSRKEYGSKVDIWSLGIMSIEMIEGEPPYLNESPLRALYLIATNGTPQLKEPDALSTIFKAFLAWALQVSADQRASASELLKHEFLLTADDVSTLAPLVKAARMAKIQEKNEKAQR</sequence>
<name>STE20_YARLI</name>
<proteinExistence type="inferred from homology"/>
<comment type="function">
    <text evidence="1">MAP4K component of the MAPK pathway required for the mating pheromone response and the regulation of cell polarity and cell cycle.</text>
</comment>
<comment type="catalytic activity">
    <reaction>
        <text>L-seryl-[protein] + ATP = O-phospho-L-seryl-[protein] + ADP + H(+)</text>
        <dbReference type="Rhea" id="RHEA:17989"/>
        <dbReference type="Rhea" id="RHEA-COMP:9863"/>
        <dbReference type="Rhea" id="RHEA-COMP:11604"/>
        <dbReference type="ChEBI" id="CHEBI:15378"/>
        <dbReference type="ChEBI" id="CHEBI:29999"/>
        <dbReference type="ChEBI" id="CHEBI:30616"/>
        <dbReference type="ChEBI" id="CHEBI:83421"/>
        <dbReference type="ChEBI" id="CHEBI:456216"/>
        <dbReference type="EC" id="2.7.11.1"/>
    </reaction>
</comment>
<comment type="catalytic activity">
    <reaction>
        <text>L-threonyl-[protein] + ATP = O-phospho-L-threonyl-[protein] + ADP + H(+)</text>
        <dbReference type="Rhea" id="RHEA:46608"/>
        <dbReference type="Rhea" id="RHEA-COMP:11060"/>
        <dbReference type="Rhea" id="RHEA-COMP:11605"/>
        <dbReference type="ChEBI" id="CHEBI:15378"/>
        <dbReference type="ChEBI" id="CHEBI:30013"/>
        <dbReference type="ChEBI" id="CHEBI:30616"/>
        <dbReference type="ChEBI" id="CHEBI:61977"/>
        <dbReference type="ChEBI" id="CHEBI:456216"/>
        <dbReference type="EC" id="2.7.11.1"/>
    </reaction>
</comment>
<comment type="subcellular location">
    <subcellularLocation>
        <location evidence="1">Cytoplasm</location>
    </subcellularLocation>
    <subcellularLocation>
        <location evidence="1">Nucleus</location>
    </subcellularLocation>
</comment>
<comment type="similarity">
    <text evidence="6">Belongs to the protein kinase superfamily. STE Ser/Thr protein kinase family. STE20 subfamily.</text>
</comment>